<dbReference type="EMBL" id="AL807366">
    <property type="protein sequence ID" value="CAD36971.1"/>
    <property type="molecule type" value="Genomic_DNA"/>
</dbReference>
<dbReference type="EMBL" id="CM002240">
    <property type="protein sequence ID" value="EAA32030.1"/>
    <property type="molecule type" value="Genomic_DNA"/>
</dbReference>
<dbReference type="RefSeq" id="XP_961266.1">
    <property type="nucleotide sequence ID" value="XM_956173.2"/>
</dbReference>
<dbReference type="SMR" id="Q8NIW7"/>
<dbReference type="STRING" id="367110.Q8NIW7"/>
<dbReference type="PaxDb" id="5141-EFNCRP00000003824"/>
<dbReference type="EnsemblFungi" id="EAA32030">
    <property type="protein sequence ID" value="EAA32030"/>
    <property type="gene ID" value="NCU04110"/>
</dbReference>
<dbReference type="GeneID" id="3877430"/>
<dbReference type="KEGG" id="ncr:NCU04110"/>
<dbReference type="VEuPathDB" id="FungiDB:NCU04110"/>
<dbReference type="HOGENOM" id="CLU_016864_3_0_1"/>
<dbReference type="InParanoid" id="Q8NIW7"/>
<dbReference type="OMA" id="PGMPSMY"/>
<dbReference type="OrthoDB" id="6777263at2759"/>
<dbReference type="Proteomes" id="UP000001805">
    <property type="component" value="Chromosome 2, Linkage Group V"/>
</dbReference>
<dbReference type="GO" id="GO:0000243">
    <property type="term" value="C:commitment complex"/>
    <property type="evidence" value="ECO:0007669"/>
    <property type="project" value="EnsemblFungi"/>
</dbReference>
<dbReference type="GO" id="GO:0005829">
    <property type="term" value="C:cytosol"/>
    <property type="evidence" value="ECO:0007669"/>
    <property type="project" value="EnsemblFungi"/>
</dbReference>
<dbReference type="GO" id="GO:0005634">
    <property type="term" value="C:nucleus"/>
    <property type="evidence" value="ECO:0000318"/>
    <property type="project" value="GO_Central"/>
</dbReference>
<dbReference type="GO" id="GO:0071004">
    <property type="term" value="C:U2-type prespliceosome"/>
    <property type="evidence" value="ECO:0007669"/>
    <property type="project" value="EnsemblFungi"/>
</dbReference>
<dbReference type="GO" id="GO:0003729">
    <property type="term" value="F:mRNA binding"/>
    <property type="evidence" value="ECO:0000318"/>
    <property type="project" value="GO_Central"/>
</dbReference>
<dbReference type="GO" id="GO:0008270">
    <property type="term" value="F:zinc ion binding"/>
    <property type="evidence" value="ECO:0007669"/>
    <property type="project" value="UniProtKB-KW"/>
</dbReference>
<dbReference type="GO" id="GO:0045292">
    <property type="term" value="P:mRNA cis splicing, via spliceosome"/>
    <property type="evidence" value="ECO:0007669"/>
    <property type="project" value="EnsemblFungi"/>
</dbReference>
<dbReference type="GO" id="GO:0048024">
    <property type="term" value="P:regulation of mRNA splicing, via spliceosome"/>
    <property type="evidence" value="ECO:0000318"/>
    <property type="project" value="GO_Central"/>
</dbReference>
<dbReference type="CDD" id="cd02395">
    <property type="entry name" value="KH-I_BBP"/>
    <property type="match status" value="1"/>
</dbReference>
<dbReference type="FunFam" id="4.10.60.10:FF:000030">
    <property type="entry name" value="Branchpoint-bridging protein"/>
    <property type="match status" value="1"/>
</dbReference>
<dbReference type="FunFam" id="3.30.1370.10:FF:000024">
    <property type="entry name" value="Branchpoint-bridging protein-like protein"/>
    <property type="match status" value="1"/>
</dbReference>
<dbReference type="Gene3D" id="6.10.140.1790">
    <property type="match status" value="1"/>
</dbReference>
<dbReference type="Gene3D" id="3.30.1370.10">
    <property type="entry name" value="K Homology domain, type 1"/>
    <property type="match status" value="1"/>
</dbReference>
<dbReference type="Gene3D" id="4.10.60.10">
    <property type="entry name" value="Zinc finger, CCHC-type"/>
    <property type="match status" value="1"/>
</dbReference>
<dbReference type="InterPro" id="IPR045071">
    <property type="entry name" value="BBP-like"/>
</dbReference>
<dbReference type="InterPro" id="IPR055256">
    <property type="entry name" value="KH_1_KHDC4/BBP-like"/>
</dbReference>
<dbReference type="InterPro" id="IPR004087">
    <property type="entry name" value="KH_dom"/>
</dbReference>
<dbReference type="InterPro" id="IPR036612">
    <property type="entry name" value="KH_dom_type_1_sf"/>
</dbReference>
<dbReference type="InterPro" id="IPR032570">
    <property type="entry name" value="SF1-HH"/>
</dbReference>
<dbReference type="InterPro" id="IPR047086">
    <property type="entry name" value="SF1-HH_sf"/>
</dbReference>
<dbReference type="InterPro" id="IPR001878">
    <property type="entry name" value="Znf_CCHC"/>
</dbReference>
<dbReference type="InterPro" id="IPR036875">
    <property type="entry name" value="Znf_CCHC_sf"/>
</dbReference>
<dbReference type="PANTHER" id="PTHR11208">
    <property type="entry name" value="RNA-BINDING PROTEIN RELATED"/>
    <property type="match status" value="1"/>
</dbReference>
<dbReference type="PANTHER" id="PTHR11208:SF45">
    <property type="entry name" value="SPLICING FACTOR 1"/>
    <property type="match status" value="1"/>
</dbReference>
<dbReference type="Pfam" id="PF22675">
    <property type="entry name" value="KH-I_KHDC4-BBP"/>
    <property type="match status" value="1"/>
</dbReference>
<dbReference type="Pfam" id="PF16275">
    <property type="entry name" value="SF1-HH"/>
    <property type="match status" value="1"/>
</dbReference>
<dbReference type="Pfam" id="PF00098">
    <property type="entry name" value="zf-CCHC"/>
    <property type="match status" value="2"/>
</dbReference>
<dbReference type="SMART" id="SM00322">
    <property type="entry name" value="KH"/>
    <property type="match status" value="1"/>
</dbReference>
<dbReference type="SMART" id="SM00343">
    <property type="entry name" value="ZnF_C2HC"/>
    <property type="match status" value="2"/>
</dbReference>
<dbReference type="SUPFAM" id="SSF54791">
    <property type="entry name" value="Eukaryotic type KH-domain (KH-domain type I)"/>
    <property type="match status" value="1"/>
</dbReference>
<dbReference type="SUPFAM" id="SSF57756">
    <property type="entry name" value="Retrovirus zinc finger-like domains"/>
    <property type="match status" value="1"/>
</dbReference>
<dbReference type="PROSITE" id="PS50084">
    <property type="entry name" value="KH_TYPE_1"/>
    <property type="match status" value="1"/>
</dbReference>
<dbReference type="PROSITE" id="PS50158">
    <property type="entry name" value="ZF_CCHC"/>
    <property type="match status" value="2"/>
</dbReference>
<protein>
    <recommendedName>
        <fullName>Branchpoint-bridging protein</fullName>
    </recommendedName>
</protein>
<gene>
    <name type="primary">bbp-1</name>
    <name type="ORF">94C8.060</name>
    <name type="ORF">NCU04110</name>
</gene>
<evidence type="ECO:0000250" key="1"/>
<evidence type="ECO:0000255" key="2">
    <source>
        <dbReference type="PROSITE-ProRule" id="PRU00047"/>
    </source>
</evidence>
<evidence type="ECO:0000255" key="3">
    <source>
        <dbReference type="PROSITE-ProRule" id="PRU00117"/>
    </source>
</evidence>
<evidence type="ECO:0000256" key="4">
    <source>
        <dbReference type="SAM" id="MobiDB-lite"/>
    </source>
</evidence>
<evidence type="ECO:0000305" key="5"/>
<sequence length="607" mass="65130">MSWRNQGITGSNNIPLGSRRRFAGDGEEEDGARSVTPSAPSSVTNGDRDRDRDGPVYSNDRDVKRGRSPERSEDGPKRRKKRNRWGEATENKAAGLMGLPTAIVANMTSEQLEAYTLHLRIEEITQKLKIDDVVPADGDRSPSPAPQYDNHGRRVNTREYRYRKKLEDERHKLIEKAMKTIPNYHPPSDYRRPTKTQEKVYVPVNDYPEINFIGLLIGPRGNTLKKMETESGAKIAIRGKGSVKEGKGRSDAAHSSNQEEDLHCLIMADTEEKVNKAKKLIHNIIETAASIPEGQNELKRNQLRELAALNGTLRDDENQACQNCGQIGHRKYDCPEKQNYTANIICRVCGNAGHMARDCPDRQRGASWRNDGPGAGRTAGRIGSSGGGDAVDREYEQLMQELGGTGAAPARIEAGPGSFSNGPSGGNGDAKPWQRGPTGGPAPWRTRNMDRDHEGGPGGPPSGPSGGPAPWARDRNERRHDDRDRGDSYYGGDRRHDDYGRGSSGGGGPAPWHQPPPGAPSAPAIPTAPAYPGAYGGYPGYGAPPGMGAAPPPGLPPPPPGAPPGLSGPLNALIQQYANAAPPPPPPAAEAPPPPPMDLPPPPPPGA</sequence>
<reference key="1">
    <citation type="journal article" date="2003" name="Nucleic Acids Res.">
        <title>What's in the genome of a filamentous fungus? Analysis of the Neurospora genome sequence.</title>
        <authorList>
            <person name="Mannhaupt G."/>
            <person name="Montrone C."/>
            <person name="Haase D."/>
            <person name="Mewes H.-W."/>
            <person name="Aign V."/>
            <person name="Hoheisel J.D."/>
            <person name="Fartmann B."/>
            <person name="Nyakatura G."/>
            <person name="Kempken F."/>
            <person name="Maier J."/>
            <person name="Schulte U."/>
        </authorList>
    </citation>
    <scope>NUCLEOTIDE SEQUENCE [LARGE SCALE GENOMIC DNA]</scope>
    <source>
        <strain>ATCC 24698 / 74-OR23-1A / CBS 708.71 / DSM 1257 / FGSC 987</strain>
    </source>
</reference>
<reference key="2">
    <citation type="journal article" date="2003" name="Nature">
        <title>The genome sequence of the filamentous fungus Neurospora crassa.</title>
        <authorList>
            <person name="Galagan J.E."/>
            <person name="Calvo S.E."/>
            <person name="Borkovich K.A."/>
            <person name="Selker E.U."/>
            <person name="Read N.D."/>
            <person name="Jaffe D.B."/>
            <person name="FitzHugh W."/>
            <person name="Ma L.-J."/>
            <person name="Smirnov S."/>
            <person name="Purcell S."/>
            <person name="Rehman B."/>
            <person name="Elkins T."/>
            <person name="Engels R."/>
            <person name="Wang S."/>
            <person name="Nielsen C.B."/>
            <person name="Butler J."/>
            <person name="Endrizzi M."/>
            <person name="Qui D."/>
            <person name="Ianakiev P."/>
            <person name="Bell-Pedersen D."/>
            <person name="Nelson M.A."/>
            <person name="Werner-Washburne M."/>
            <person name="Selitrennikoff C.P."/>
            <person name="Kinsey J.A."/>
            <person name="Braun E.L."/>
            <person name="Zelter A."/>
            <person name="Schulte U."/>
            <person name="Kothe G.O."/>
            <person name="Jedd G."/>
            <person name="Mewes H.-W."/>
            <person name="Staben C."/>
            <person name="Marcotte E."/>
            <person name="Greenberg D."/>
            <person name="Roy A."/>
            <person name="Foley K."/>
            <person name="Naylor J."/>
            <person name="Stange-Thomann N."/>
            <person name="Barrett R."/>
            <person name="Gnerre S."/>
            <person name="Kamal M."/>
            <person name="Kamvysselis M."/>
            <person name="Mauceli E.W."/>
            <person name="Bielke C."/>
            <person name="Rudd S."/>
            <person name="Frishman D."/>
            <person name="Krystofova S."/>
            <person name="Rasmussen C."/>
            <person name="Metzenberg R.L."/>
            <person name="Perkins D.D."/>
            <person name="Kroken S."/>
            <person name="Cogoni C."/>
            <person name="Macino G."/>
            <person name="Catcheside D.E.A."/>
            <person name="Li W."/>
            <person name="Pratt R.J."/>
            <person name="Osmani S.A."/>
            <person name="DeSouza C.P.C."/>
            <person name="Glass N.L."/>
            <person name="Orbach M.J."/>
            <person name="Berglund J.A."/>
            <person name="Voelker R."/>
            <person name="Yarden O."/>
            <person name="Plamann M."/>
            <person name="Seiler S."/>
            <person name="Dunlap J.C."/>
            <person name="Radford A."/>
            <person name="Aramayo R."/>
            <person name="Natvig D.O."/>
            <person name="Alex L.A."/>
            <person name="Mannhaupt G."/>
            <person name="Ebbole D.J."/>
            <person name="Freitag M."/>
            <person name="Paulsen I."/>
            <person name="Sachs M.S."/>
            <person name="Lander E.S."/>
            <person name="Nusbaum C."/>
            <person name="Birren B.W."/>
        </authorList>
    </citation>
    <scope>NUCLEOTIDE SEQUENCE [LARGE SCALE GENOMIC DNA]</scope>
    <source>
        <strain>ATCC 24698 / 74-OR23-1A / CBS 708.71 / DSM 1257 / FGSC 987</strain>
    </source>
</reference>
<feature type="chain" id="PRO_0000256149" description="Branchpoint-bridging protein">
    <location>
        <begin position="1"/>
        <end position="607"/>
    </location>
</feature>
<feature type="domain" description="KH" evidence="3">
    <location>
        <begin position="201"/>
        <end position="281"/>
    </location>
</feature>
<feature type="zinc finger region" description="CCHC-type 1" evidence="2">
    <location>
        <begin position="319"/>
        <end position="336"/>
    </location>
</feature>
<feature type="zinc finger region" description="CCHC-type 2" evidence="2">
    <location>
        <begin position="344"/>
        <end position="361"/>
    </location>
</feature>
<feature type="region of interest" description="Disordered" evidence="4">
    <location>
        <begin position="1"/>
        <end position="92"/>
    </location>
</feature>
<feature type="region of interest" description="Disordered" evidence="4">
    <location>
        <begin position="134"/>
        <end position="155"/>
    </location>
</feature>
<feature type="region of interest" description="Disordered" evidence="4">
    <location>
        <begin position="363"/>
        <end position="390"/>
    </location>
</feature>
<feature type="region of interest" description="Disordered" evidence="4">
    <location>
        <begin position="407"/>
        <end position="607"/>
    </location>
</feature>
<feature type="compositionally biased region" description="Polar residues" evidence="4">
    <location>
        <begin position="1"/>
        <end position="15"/>
    </location>
</feature>
<feature type="compositionally biased region" description="Polar residues" evidence="4">
    <location>
        <begin position="35"/>
        <end position="45"/>
    </location>
</feature>
<feature type="compositionally biased region" description="Basic and acidic residues" evidence="4">
    <location>
        <begin position="46"/>
        <end position="76"/>
    </location>
</feature>
<feature type="compositionally biased region" description="Gly residues" evidence="4">
    <location>
        <begin position="373"/>
        <end position="389"/>
    </location>
</feature>
<feature type="compositionally biased region" description="Basic and acidic residues" evidence="4">
    <location>
        <begin position="472"/>
        <end position="500"/>
    </location>
</feature>
<feature type="compositionally biased region" description="Low complexity" evidence="4">
    <location>
        <begin position="521"/>
        <end position="533"/>
    </location>
</feature>
<feature type="compositionally biased region" description="Gly residues" evidence="4">
    <location>
        <begin position="534"/>
        <end position="545"/>
    </location>
</feature>
<feature type="compositionally biased region" description="Pro residues" evidence="4">
    <location>
        <begin position="550"/>
        <end position="563"/>
    </location>
</feature>
<feature type="compositionally biased region" description="Pro residues" evidence="4">
    <location>
        <begin position="581"/>
        <end position="607"/>
    </location>
</feature>
<name>BBP_NEUCR</name>
<comment type="function">
    <text evidence="1">Necessary for the splicing of pre-mRNA. Has a role in the recognition of the branch site (5'-UACUAAC-3'), the pyrimidine tract and the 3'-splice site at the 3'-end of introns (By similarity).</text>
</comment>
<comment type="subcellular location">
    <subcellularLocation>
        <location evidence="1">Nucleus</location>
    </subcellularLocation>
</comment>
<comment type="similarity">
    <text evidence="5">Belongs to the BBP/SF1 family.</text>
</comment>
<organism>
    <name type="scientific">Neurospora crassa (strain ATCC 24698 / 74-OR23-1A / CBS 708.71 / DSM 1257 / FGSC 987)</name>
    <dbReference type="NCBI Taxonomy" id="367110"/>
    <lineage>
        <taxon>Eukaryota</taxon>
        <taxon>Fungi</taxon>
        <taxon>Dikarya</taxon>
        <taxon>Ascomycota</taxon>
        <taxon>Pezizomycotina</taxon>
        <taxon>Sordariomycetes</taxon>
        <taxon>Sordariomycetidae</taxon>
        <taxon>Sordariales</taxon>
        <taxon>Sordariaceae</taxon>
        <taxon>Neurospora</taxon>
    </lineage>
</organism>
<proteinExistence type="inferred from homology"/>
<accession>Q8NIW7</accession>
<keyword id="KW-0479">Metal-binding</keyword>
<keyword id="KW-0507">mRNA processing</keyword>
<keyword id="KW-0508">mRNA splicing</keyword>
<keyword id="KW-0539">Nucleus</keyword>
<keyword id="KW-1185">Reference proteome</keyword>
<keyword id="KW-0677">Repeat</keyword>
<keyword id="KW-0694">RNA-binding</keyword>
<keyword id="KW-0747">Spliceosome</keyword>
<keyword id="KW-0862">Zinc</keyword>
<keyword id="KW-0863">Zinc-finger</keyword>